<evidence type="ECO:0000305" key="1"/>
<feature type="chain" id="PRO_0000298961" description="Iron-sulfur cluster assembly SufBD family protein SH2035">
    <location>
        <begin position="1"/>
        <end position="465"/>
    </location>
</feature>
<comment type="similarity">
    <text evidence="1">Belongs to the iron-sulfur cluster assembly SufBD family.</text>
</comment>
<reference key="1">
    <citation type="journal article" date="2005" name="J. Bacteriol.">
        <title>Whole-genome sequencing of Staphylococcus haemolyticus uncovers the extreme plasticity of its genome and the evolution of human-colonizing staphylococcal species.</title>
        <authorList>
            <person name="Takeuchi F."/>
            <person name="Watanabe S."/>
            <person name="Baba T."/>
            <person name="Yuzawa H."/>
            <person name="Ito T."/>
            <person name="Morimoto Y."/>
            <person name="Kuroda M."/>
            <person name="Cui L."/>
            <person name="Takahashi M."/>
            <person name="Ankai A."/>
            <person name="Baba S."/>
            <person name="Fukui S."/>
            <person name="Lee J.C."/>
            <person name="Hiramatsu K."/>
        </authorList>
    </citation>
    <scope>NUCLEOTIDE SEQUENCE [LARGE SCALE GENOMIC DNA]</scope>
    <source>
        <strain>JCSC1435</strain>
    </source>
</reference>
<proteinExistence type="inferred from homology"/>
<gene>
    <name type="ordered locus">SH2035</name>
</gene>
<sequence length="465" mass="52548">MAKKAPDVGDYKYGFHDEDVSIFRSERGLTENIVREISKMKEEPEWMLDFRLKALKLFYKMPMPQWGGDLSELNFDDITYYVKPSEHTQRSWDEVPEEIKRTFDKLGIPEAEQKYLAGVSAQYESEVVYHNMEKELEEKGIIFKDTDSALRENEELFKEYFASVVPAADNKFAALNSAVWSGGSFIYVPKNVKLDTPLQAYFRINSENMGQFERTLIIADEGASVNYVEGCTAPVYTTSSLHSAVVEIIVHKDAHVRYTTIQNWANNVYNLVTKRTFVHENGNMEWVDGNLGSKLTMKYPNCVLLGEGAKGSTLSIAFAGKGQVQDAGAKMIHKAPNTSSTIVSKSISKNGGKVIYRGIVHFGRKAKGARSNIECDTLILDNESTSDTIPYNEVFNDNISLEHEAKVSKVSEEQLFYLMSRGISEEEATEMIVMGFIEPFTKELPMEYAVEMNRLIKFEMEGSIG</sequence>
<organism>
    <name type="scientific">Staphylococcus haemolyticus (strain JCSC1435)</name>
    <dbReference type="NCBI Taxonomy" id="279808"/>
    <lineage>
        <taxon>Bacteria</taxon>
        <taxon>Bacillati</taxon>
        <taxon>Bacillota</taxon>
        <taxon>Bacilli</taxon>
        <taxon>Bacillales</taxon>
        <taxon>Staphylococcaceae</taxon>
        <taxon>Staphylococcus</taxon>
    </lineage>
</organism>
<name>Y2035_STAHJ</name>
<accession>Q4L4T1</accession>
<protein>
    <recommendedName>
        <fullName>Iron-sulfur cluster assembly SufBD family protein SH2035</fullName>
    </recommendedName>
</protein>
<dbReference type="EMBL" id="AP006716">
    <property type="protein sequence ID" value="BAE05344.1"/>
    <property type="molecule type" value="Genomic_DNA"/>
</dbReference>
<dbReference type="SMR" id="Q4L4T1"/>
<dbReference type="KEGG" id="sha:SH2035"/>
<dbReference type="eggNOG" id="COG0719">
    <property type="taxonomic scope" value="Bacteria"/>
</dbReference>
<dbReference type="HOGENOM" id="CLU_026231_0_1_9"/>
<dbReference type="OrthoDB" id="9803529at2"/>
<dbReference type="Proteomes" id="UP000000543">
    <property type="component" value="Chromosome"/>
</dbReference>
<dbReference type="GO" id="GO:0016226">
    <property type="term" value="P:iron-sulfur cluster assembly"/>
    <property type="evidence" value="ECO:0007669"/>
    <property type="project" value="InterPro"/>
</dbReference>
<dbReference type="InterPro" id="IPR055346">
    <property type="entry name" value="Fe-S_cluster_assembly_SufBD"/>
</dbReference>
<dbReference type="InterPro" id="IPR010231">
    <property type="entry name" value="SUF_FeS_clus_asmbl_SufB"/>
</dbReference>
<dbReference type="InterPro" id="IPR000825">
    <property type="entry name" value="SUF_FeS_clus_asmbl_SufBD_core"/>
</dbReference>
<dbReference type="InterPro" id="IPR037284">
    <property type="entry name" value="SUF_FeS_clus_asmbl_SufBD_sf"/>
</dbReference>
<dbReference type="InterPro" id="IPR045595">
    <property type="entry name" value="SufBD_N"/>
</dbReference>
<dbReference type="NCBIfam" id="TIGR01980">
    <property type="entry name" value="sufB"/>
    <property type="match status" value="1"/>
</dbReference>
<dbReference type="PANTHER" id="PTHR30508">
    <property type="entry name" value="FES CLUSTER ASSEMBLY PROTEIN SUF"/>
    <property type="match status" value="1"/>
</dbReference>
<dbReference type="PANTHER" id="PTHR30508:SF1">
    <property type="entry name" value="UPF0051 PROTEIN ABCI8, CHLOROPLASTIC-RELATED"/>
    <property type="match status" value="1"/>
</dbReference>
<dbReference type="Pfam" id="PF01458">
    <property type="entry name" value="SUFBD_core"/>
    <property type="match status" value="1"/>
</dbReference>
<dbReference type="Pfam" id="PF19295">
    <property type="entry name" value="SufBD_N"/>
    <property type="match status" value="1"/>
</dbReference>
<dbReference type="SUPFAM" id="SSF101960">
    <property type="entry name" value="Stabilizer of iron transporter SufD"/>
    <property type="match status" value="1"/>
</dbReference>